<evidence type="ECO:0000255" key="1">
    <source>
        <dbReference type="HAMAP-Rule" id="MF_00026"/>
    </source>
</evidence>
<gene>
    <name type="ordered locus">TK1278</name>
</gene>
<dbReference type="EMBL" id="AP006878">
    <property type="protein sequence ID" value="BAD85467.1"/>
    <property type="molecule type" value="Genomic_DNA"/>
</dbReference>
<dbReference type="RefSeq" id="WP_011250229.1">
    <property type="nucleotide sequence ID" value="NC_006624.1"/>
</dbReference>
<dbReference type="SMR" id="Q5JGN3"/>
<dbReference type="FunCoup" id="Q5JGN3">
    <property type="interactions" value="98"/>
</dbReference>
<dbReference type="STRING" id="69014.TK1278"/>
<dbReference type="EnsemblBacteria" id="BAD85467">
    <property type="protein sequence ID" value="BAD85467"/>
    <property type="gene ID" value="TK1278"/>
</dbReference>
<dbReference type="GeneID" id="78447795"/>
<dbReference type="KEGG" id="tko:TK1278"/>
<dbReference type="PATRIC" id="fig|69014.16.peg.1250"/>
<dbReference type="eggNOG" id="arCOG04179">
    <property type="taxonomic scope" value="Archaea"/>
</dbReference>
<dbReference type="HOGENOM" id="CLU_122978_3_0_2"/>
<dbReference type="InParanoid" id="Q5JGN3"/>
<dbReference type="OrthoDB" id="7912at2157"/>
<dbReference type="PhylomeDB" id="Q5JGN3"/>
<dbReference type="Proteomes" id="UP000000536">
    <property type="component" value="Chromosome"/>
</dbReference>
<dbReference type="GO" id="GO:0005829">
    <property type="term" value="C:cytosol"/>
    <property type="evidence" value="ECO:0000318"/>
    <property type="project" value="GO_Central"/>
</dbReference>
<dbReference type="GO" id="GO:0003677">
    <property type="term" value="F:DNA binding"/>
    <property type="evidence" value="ECO:0007669"/>
    <property type="project" value="UniProtKB-UniRule"/>
</dbReference>
<dbReference type="FunFam" id="1.10.8.140:FF:000013">
    <property type="entry name" value="DNA-binding protein A3L02_08620"/>
    <property type="match status" value="1"/>
</dbReference>
<dbReference type="Gene3D" id="1.10.8.140">
    <property type="entry name" value="PDCD5-like"/>
    <property type="match status" value="1"/>
</dbReference>
<dbReference type="HAMAP" id="MF_00026">
    <property type="entry name" value="dsDNA_bind"/>
    <property type="match status" value="1"/>
</dbReference>
<dbReference type="InterPro" id="IPR022889">
    <property type="entry name" value="DNA_bind_arc"/>
</dbReference>
<dbReference type="InterPro" id="IPR002836">
    <property type="entry name" value="PDCD5-like"/>
</dbReference>
<dbReference type="InterPro" id="IPR036883">
    <property type="entry name" value="PDCD5-like_sf"/>
</dbReference>
<dbReference type="NCBIfam" id="NF003268">
    <property type="entry name" value="PRK04239.1"/>
    <property type="match status" value="1"/>
</dbReference>
<dbReference type="PANTHER" id="PTHR10840">
    <property type="entry name" value="PROGRAMMED CELL DEATH PROTEIN 5"/>
    <property type="match status" value="1"/>
</dbReference>
<dbReference type="PANTHER" id="PTHR10840:SF0">
    <property type="entry name" value="PROGRAMMED CELL DEATH PROTEIN 5"/>
    <property type="match status" value="1"/>
</dbReference>
<dbReference type="Pfam" id="PF01984">
    <property type="entry name" value="dsDNA_bind"/>
    <property type="match status" value="1"/>
</dbReference>
<dbReference type="PIRSF" id="PIRSF015730">
    <property type="entry name" value="TFAR19"/>
    <property type="match status" value="1"/>
</dbReference>
<dbReference type="SUPFAM" id="SSF46950">
    <property type="entry name" value="Double-stranded DNA-binding domain"/>
    <property type="match status" value="1"/>
</dbReference>
<organism>
    <name type="scientific">Thermococcus kodakarensis (strain ATCC BAA-918 / JCM 12380 / KOD1)</name>
    <name type="common">Pyrococcus kodakaraensis (strain KOD1)</name>
    <dbReference type="NCBI Taxonomy" id="69014"/>
    <lineage>
        <taxon>Archaea</taxon>
        <taxon>Methanobacteriati</taxon>
        <taxon>Methanobacteriota</taxon>
        <taxon>Thermococci</taxon>
        <taxon>Thermococcales</taxon>
        <taxon>Thermococcaceae</taxon>
        <taxon>Thermococcus</taxon>
    </lineage>
</organism>
<name>Y1278_THEKO</name>
<protein>
    <recommendedName>
        <fullName evidence="1">DNA-binding protein TK1278</fullName>
    </recommendedName>
</protein>
<comment type="similarity">
    <text evidence="1">Belongs to the PDCD5 family.</text>
</comment>
<accession>Q5JGN3</accession>
<feature type="chain" id="PRO_0000121564" description="DNA-binding protein TK1278">
    <location>
        <begin position="1"/>
        <end position="112"/>
    </location>
</feature>
<reference key="1">
    <citation type="journal article" date="2005" name="Genome Res.">
        <title>Complete genome sequence of the hyperthermophilic archaeon Thermococcus kodakaraensis KOD1 and comparison with Pyrococcus genomes.</title>
        <authorList>
            <person name="Fukui T."/>
            <person name="Atomi H."/>
            <person name="Kanai T."/>
            <person name="Matsumi R."/>
            <person name="Fujiwara S."/>
            <person name="Imanaka T."/>
        </authorList>
    </citation>
    <scope>NUCLEOTIDE SEQUENCE [LARGE SCALE GENOMIC DNA]</scope>
    <source>
        <strain>ATCC BAA-918 / JCM 12380 / KOD1</strain>
    </source>
</reference>
<keyword id="KW-0238">DNA-binding</keyword>
<keyword id="KW-1185">Reference proteome</keyword>
<sequence length="112" mass="13497">MAEDIEEIRKRKLMELQKKYLEQQKAQEEALKREMELEAQLEAIMRKILTPEARERLGRVKLVKPELARQVELLLVQLYQAGQIRERIDDAKLKRILAEIDARTRRDFKIKW</sequence>
<proteinExistence type="inferred from homology"/>